<accession>B0CKX7</accession>
<organism>
    <name type="scientific">Brucella suis (strain ATCC 23445 / NCTC 10510)</name>
    <dbReference type="NCBI Taxonomy" id="470137"/>
    <lineage>
        <taxon>Bacteria</taxon>
        <taxon>Pseudomonadati</taxon>
        <taxon>Pseudomonadota</taxon>
        <taxon>Alphaproteobacteria</taxon>
        <taxon>Hyphomicrobiales</taxon>
        <taxon>Brucellaceae</taxon>
        <taxon>Brucella/Ochrobactrum group</taxon>
        <taxon>Brucella</taxon>
    </lineage>
</organism>
<gene>
    <name evidence="1" type="primary">rpoZ</name>
    <name type="ordered locus">BSUIS_A0679</name>
</gene>
<evidence type="ECO:0000255" key="1">
    <source>
        <dbReference type="HAMAP-Rule" id="MF_00366"/>
    </source>
</evidence>
<dbReference type="EC" id="2.7.7.6" evidence="1"/>
<dbReference type="EMBL" id="CP000911">
    <property type="protein sequence ID" value="ABY37757.1"/>
    <property type="molecule type" value="Genomic_DNA"/>
</dbReference>
<dbReference type="RefSeq" id="WP_004690699.1">
    <property type="nucleotide sequence ID" value="NC_010169.1"/>
</dbReference>
<dbReference type="SMR" id="B0CKX7"/>
<dbReference type="GeneID" id="55590377"/>
<dbReference type="KEGG" id="bmt:BSUIS_A0679"/>
<dbReference type="HOGENOM" id="CLU_125406_2_0_5"/>
<dbReference type="Proteomes" id="UP000008545">
    <property type="component" value="Chromosome I"/>
</dbReference>
<dbReference type="GO" id="GO:0000428">
    <property type="term" value="C:DNA-directed RNA polymerase complex"/>
    <property type="evidence" value="ECO:0007669"/>
    <property type="project" value="UniProtKB-KW"/>
</dbReference>
<dbReference type="GO" id="GO:0003677">
    <property type="term" value="F:DNA binding"/>
    <property type="evidence" value="ECO:0007669"/>
    <property type="project" value="UniProtKB-UniRule"/>
</dbReference>
<dbReference type="GO" id="GO:0003899">
    <property type="term" value="F:DNA-directed RNA polymerase activity"/>
    <property type="evidence" value="ECO:0007669"/>
    <property type="project" value="UniProtKB-UniRule"/>
</dbReference>
<dbReference type="GO" id="GO:0006351">
    <property type="term" value="P:DNA-templated transcription"/>
    <property type="evidence" value="ECO:0007669"/>
    <property type="project" value="UniProtKB-UniRule"/>
</dbReference>
<dbReference type="Gene3D" id="3.90.940.10">
    <property type="match status" value="1"/>
</dbReference>
<dbReference type="HAMAP" id="MF_00366">
    <property type="entry name" value="RNApol_bact_RpoZ"/>
    <property type="match status" value="1"/>
</dbReference>
<dbReference type="InterPro" id="IPR003716">
    <property type="entry name" value="DNA-dir_RNA_pol_omega"/>
</dbReference>
<dbReference type="InterPro" id="IPR006110">
    <property type="entry name" value="Pol_omega/Rpo6/RPB6"/>
</dbReference>
<dbReference type="InterPro" id="IPR036161">
    <property type="entry name" value="RPB6/omega-like_sf"/>
</dbReference>
<dbReference type="NCBIfam" id="TIGR00690">
    <property type="entry name" value="rpoZ"/>
    <property type="match status" value="1"/>
</dbReference>
<dbReference type="PANTHER" id="PTHR34476">
    <property type="entry name" value="DNA-DIRECTED RNA POLYMERASE SUBUNIT OMEGA"/>
    <property type="match status" value="1"/>
</dbReference>
<dbReference type="PANTHER" id="PTHR34476:SF1">
    <property type="entry name" value="DNA-DIRECTED RNA POLYMERASE SUBUNIT OMEGA"/>
    <property type="match status" value="1"/>
</dbReference>
<dbReference type="Pfam" id="PF01192">
    <property type="entry name" value="RNA_pol_Rpb6"/>
    <property type="match status" value="1"/>
</dbReference>
<dbReference type="SMART" id="SM01409">
    <property type="entry name" value="RNA_pol_Rpb6"/>
    <property type="match status" value="1"/>
</dbReference>
<dbReference type="SUPFAM" id="SSF63562">
    <property type="entry name" value="RPB6/omega subunit-like"/>
    <property type="match status" value="1"/>
</dbReference>
<proteinExistence type="inferred from homology"/>
<protein>
    <recommendedName>
        <fullName evidence="1">DNA-directed RNA polymerase subunit omega</fullName>
        <shortName evidence="1">RNAP omega subunit</shortName>
        <ecNumber evidence="1">2.7.7.6</ecNumber>
    </recommendedName>
    <alternativeName>
        <fullName evidence="1">RNA polymerase omega subunit</fullName>
    </alternativeName>
    <alternativeName>
        <fullName evidence="1">Transcriptase subunit omega</fullName>
    </alternativeName>
</protein>
<sequence>MARVTVEDCVDKVENRFELVLLAGHRARQISQGVPITVDRDNDKNPVVALREIADETLSPDDLKEDLIHSLQKHVEVDEPEAAPAQIANAAEEIAEGIAEAGEEDVVTFDRMSEEELLAGIEGLVAPEKNDGF</sequence>
<name>RPOZ_BRUSI</name>
<reference key="1">
    <citation type="submission" date="2007-12" db="EMBL/GenBank/DDBJ databases">
        <title>Brucella suis ATCC 23445 whole genome shotgun sequencing project.</title>
        <authorList>
            <person name="Setubal J.C."/>
            <person name="Bowns C."/>
            <person name="Boyle S."/>
            <person name="Crasta O.R."/>
            <person name="Czar M.J."/>
            <person name="Dharmanolla C."/>
            <person name="Gillespie J.J."/>
            <person name="Kenyon R.W."/>
            <person name="Lu J."/>
            <person name="Mane S."/>
            <person name="Mohapatra S."/>
            <person name="Nagrani S."/>
            <person name="Purkayastha A."/>
            <person name="Rajasimha H.K."/>
            <person name="Shallom J.M."/>
            <person name="Shallom S."/>
            <person name="Shukla M."/>
            <person name="Snyder E.E."/>
            <person name="Sobral B.W."/>
            <person name="Wattam A.R."/>
            <person name="Will R."/>
            <person name="Williams K."/>
            <person name="Yoo H."/>
            <person name="Bruce D."/>
            <person name="Detter C."/>
            <person name="Munk C."/>
            <person name="Brettin T.S."/>
        </authorList>
    </citation>
    <scope>NUCLEOTIDE SEQUENCE [LARGE SCALE GENOMIC DNA]</scope>
    <source>
        <strain>ATCC 23445 / NCTC 10510</strain>
    </source>
</reference>
<feature type="chain" id="PRO_1000079617" description="DNA-directed RNA polymerase subunit omega">
    <location>
        <begin position="1"/>
        <end position="133"/>
    </location>
</feature>
<comment type="function">
    <text evidence="1">Promotes RNA polymerase assembly. Latches the N- and C-terminal regions of the beta' subunit thereby facilitating its interaction with the beta and alpha subunits.</text>
</comment>
<comment type="catalytic activity">
    <reaction evidence="1">
        <text>RNA(n) + a ribonucleoside 5'-triphosphate = RNA(n+1) + diphosphate</text>
        <dbReference type="Rhea" id="RHEA:21248"/>
        <dbReference type="Rhea" id="RHEA-COMP:14527"/>
        <dbReference type="Rhea" id="RHEA-COMP:17342"/>
        <dbReference type="ChEBI" id="CHEBI:33019"/>
        <dbReference type="ChEBI" id="CHEBI:61557"/>
        <dbReference type="ChEBI" id="CHEBI:140395"/>
        <dbReference type="EC" id="2.7.7.6"/>
    </reaction>
</comment>
<comment type="subunit">
    <text evidence="1">The RNAP catalytic core consists of 2 alpha, 1 beta, 1 beta' and 1 omega subunit. When a sigma factor is associated with the core the holoenzyme is formed, which can initiate transcription.</text>
</comment>
<comment type="similarity">
    <text evidence="1">Belongs to the RNA polymerase subunit omega family.</text>
</comment>
<keyword id="KW-0240">DNA-directed RNA polymerase</keyword>
<keyword id="KW-0548">Nucleotidyltransferase</keyword>
<keyword id="KW-0804">Transcription</keyword>
<keyword id="KW-0808">Transferase</keyword>